<reference key="1">
    <citation type="journal article" date="1998" name="Nature">
        <title>Deciphering the biology of Mycobacterium tuberculosis from the complete genome sequence.</title>
        <authorList>
            <person name="Cole S.T."/>
            <person name="Brosch R."/>
            <person name="Parkhill J."/>
            <person name="Garnier T."/>
            <person name="Churcher C.M."/>
            <person name="Harris D.E."/>
            <person name="Gordon S.V."/>
            <person name="Eiglmeier K."/>
            <person name="Gas S."/>
            <person name="Barry C.E. III"/>
            <person name="Tekaia F."/>
            <person name="Badcock K."/>
            <person name="Basham D."/>
            <person name="Brown D."/>
            <person name="Chillingworth T."/>
            <person name="Connor R."/>
            <person name="Davies R.M."/>
            <person name="Devlin K."/>
            <person name="Feltwell T."/>
            <person name="Gentles S."/>
            <person name="Hamlin N."/>
            <person name="Holroyd S."/>
            <person name="Hornsby T."/>
            <person name="Jagels K."/>
            <person name="Krogh A."/>
            <person name="McLean J."/>
            <person name="Moule S."/>
            <person name="Murphy L.D."/>
            <person name="Oliver S."/>
            <person name="Osborne J."/>
            <person name="Quail M.A."/>
            <person name="Rajandream M.A."/>
            <person name="Rogers J."/>
            <person name="Rutter S."/>
            <person name="Seeger K."/>
            <person name="Skelton S."/>
            <person name="Squares S."/>
            <person name="Squares R."/>
            <person name="Sulston J.E."/>
            <person name="Taylor K."/>
            <person name="Whitehead S."/>
            <person name="Barrell B.G."/>
        </authorList>
    </citation>
    <scope>NUCLEOTIDE SEQUENCE [LARGE SCALE GENOMIC DNA]</scope>
    <source>
        <strain>ATCC 25618 / H37Rv</strain>
    </source>
</reference>
<reference key="2">
    <citation type="journal article" date="2005" name="Nucleic Acids Res.">
        <title>Toxin-antitoxin loci are highly abundant in free-living but lost from host-associated prokaryotes.</title>
        <authorList>
            <person name="Pandey D.P."/>
            <person name="Gerdes K."/>
        </authorList>
    </citation>
    <scope>POSSIBLE FUNCTION</scope>
    <source>
        <strain>ATCC 25618 / H37Rv</strain>
    </source>
</reference>
<reference key="3">
    <citation type="journal article" date="2009" name="PLoS Genet.">
        <title>Comprehensive functional analysis of Mycobacterium tuberculosis toxin-antitoxin systems: implications for pathogenesis, stress responses, and evolution.</title>
        <authorList>
            <person name="Ramage H.R."/>
            <person name="Connolly L.E."/>
            <person name="Cox J.S."/>
        </authorList>
    </citation>
    <scope>EXPRESSION IN M.SMEGMATIS</scope>
    <scope>FUNCTION AS A TOXIN</scope>
    <source>
        <strain>ATCC 35801 / TMC 107 / Erdman</strain>
    </source>
</reference>
<reference key="4">
    <citation type="journal article" date="2011" name="Mol. Cell. Proteomics">
        <title>Proteogenomic analysis of Mycobacterium tuberculosis by high resolution mass spectrometry.</title>
        <authorList>
            <person name="Kelkar D.S."/>
            <person name="Kumar D."/>
            <person name="Kumar P."/>
            <person name="Balakrishnan L."/>
            <person name="Muthusamy B."/>
            <person name="Yadav A.K."/>
            <person name="Shrivastava P."/>
            <person name="Marimuthu A."/>
            <person name="Anand S."/>
            <person name="Sundaram H."/>
            <person name="Kingsbury R."/>
            <person name="Harsha H.C."/>
            <person name="Nair B."/>
            <person name="Prasad T.S."/>
            <person name="Chauhan D.S."/>
            <person name="Katoch K."/>
            <person name="Katoch V.M."/>
            <person name="Kumar P."/>
            <person name="Chaerkady R."/>
            <person name="Ramachandran S."/>
            <person name="Dash D."/>
            <person name="Pandey A."/>
        </authorList>
    </citation>
    <scope>IDENTIFICATION BY MASS SPECTROMETRY [LARGE SCALE ANALYSIS]</scope>
    <source>
        <strain>ATCC 25618 / H37Rv</strain>
    </source>
</reference>
<reference key="5">
    <citation type="journal article" date="2013" name="Mol. Cell. Proteomics">
        <title>Proteomic profiling of Mycobacterium tuberculosis identifies nutrient-starvation-responsive toxin-antitoxin systems.</title>
        <authorList>
            <person name="Albrethsen J."/>
            <person name="Agner J."/>
            <person name="Piersma S.R."/>
            <person name="Hoejrup P."/>
            <person name="Pham T.V."/>
            <person name="Weldingh K."/>
            <person name="Jimenez C.R."/>
            <person name="Andersen P."/>
            <person name="Rosenkrands I."/>
        </authorList>
    </citation>
    <scope>IDENTIFICATION BY MASS SPECTROMETRY</scope>
    <scope>SUBCELLULAR LOCATION</scope>
    <source>
        <strain>ATCC 27294 / TMC 102 / H37Rv</strain>
    </source>
</reference>
<protein>
    <recommendedName>
        <fullName evidence="1">Ribonuclease VapC22</fullName>
        <shortName evidence="1">RNase VapC22</shortName>
        <ecNumber evidence="1">3.1.-.-</ecNumber>
    </recommendedName>
    <alternativeName>
        <fullName evidence="1">Toxin VapC22</fullName>
    </alternativeName>
</protein>
<comment type="function">
    <text evidence="1 2">Toxic component of a type II toxin-antitoxin (TA) system. An RNase (By similarity). Upon expression in M.smegmatis inhibits translation and colony formation. Its toxic effect on colony formation is neutralized by coexpression with cognate antitoxin VapB22; the effect on translation has not been tested but is probably neutralized also.</text>
</comment>
<comment type="cofactor">
    <cofactor evidence="1">
        <name>Mg(2+)</name>
        <dbReference type="ChEBI" id="CHEBI:18420"/>
    </cofactor>
</comment>
<comment type="subcellular location">
    <subcellularLocation>
        <location>Secreted</location>
    </subcellularLocation>
    <text evidence="3">Following 6 weeks of nutrient starvation.</text>
</comment>
<comment type="similarity">
    <text evidence="1">Belongs to the PINc/VapC protein family.</text>
</comment>
<organism>
    <name type="scientific">Mycobacterium tuberculosis (strain ATCC 25618 / H37Rv)</name>
    <dbReference type="NCBI Taxonomy" id="83332"/>
    <lineage>
        <taxon>Bacteria</taxon>
        <taxon>Bacillati</taxon>
        <taxon>Actinomycetota</taxon>
        <taxon>Actinomycetes</taxon>
        <taxon>Mycobacteriales</taxon>
        <taxon>Mycobacteriaceae</taxon>
        <taxon>Mycobacterium</taxon>
        <taxon>Mycobacterium tuberculosis complex</taxon>
    </lineage>
</organism>
<gene>
    <name evidence="1" type="primary">vapC22</name>
    <name type="ordered locus">Rv2829c</name>
</gene>
<proteinExistence type="evidence at protein level"/>
<name>VPC22_MYCTU</name>
<keyword id="KW-0378">Hydrolase</keyword>
<keyword id="KW-0460">Magnesium</keyword>
<keyword id="KW-0479">Metal-binding</keyword>
<keyword id="KW-0540">Nuclease</keyword>
<keyword id="KW-1185">Reference proteome</keyword>
<keyword id="KW-0964">Secreted</keyword>
<keyword id="KW-1277">Toxin-antitoxin system</keyword>
<feature type="chain" id="PRO_0000407881" description="Ribonuclease VapC22">
    <location>
        <begin position="1"/>
        <end position="130"/>
    </location>
</feature>
<feature type="domain" description="PINc" evidence="1">
    <location>
        <begin position="4"/>
        <end position="119"/>
    </location>
</feature>
<feature type="binding site" evidence="1">
    <location>
        <position position="7"/>
    </location>
    <ligand>
        <name>Mg(2+)</name>
        <dbReference type="ChEBI" id="CHEBI:18420"/>
    </ligand>
</feature>
<feature type="binding site" evidence="1">
    <location>
        <position position="97"/>
    </location>
    <ligand>
        <name>Mg(2+)</name>
        <dbReference type="ChEBI" id="CHEBI:18420"/>
    </ligand>
</feature>
<accession>P71623</accession>
<accession>L0TAS1</accession>
<dbReference type="EC" id="3.1.-.-" evidence="1"/>
<dbReference type="EMBL" id="AL123456">
    <property type="protein sequence ID" value="CCP45630.1"/>
    <property type="molecule type" value="Genomic_DNA"/>
</dbReference>
<dbReference type="PIR" id="H70692">
    <property type="entry name" value="H70692"/>
</dbReference>
<dbReference type="RefSeq" id="NP_217345.1">
    <property type="nucleotide sequence ID" value="NC_000962.3"/>
</dbReference>
<dbReference type="RefSeq" id="WP_003414492.1">
    <property type="nucleotide sequence ID" value="NZ_NVQJ01000006.1"/>
</dbReference>
<dbReference type="SMR" id="P71623"/>
<dbReference type="STRING" id="83332.Rv2829c"/>
<dbReference type="PaxDb" id="83332-Rv2829c"/>
<dbReference type="GeneID" id="887730"/>
<dbReference type="KEGG" id="mtu:Rv2829c"/>
<dbReference type="KEGG" id="mtv:RVBD_2829c"/>
<dbReference type="TubercuList" id="Rv2829c"/>
<dbReference type="eggNOG" id="COG3744">
    <property type="taxonomic scope" value="Bacteria"/>
</dbReference>
<dbReference type="InParanoid" id="P71623"/>
<dbReference type="OrthoDB" id="9798990at2"/>
<dbReference type="PhylomeDB" id="P71623"/>
<dbReference type="PHI-base" id="PHI:10614"/>
<dbReference type="Proteomes" id="UP000001584">
    <property type="component" value="Chromosome"/>
</dbReference>
<dbReference type="GO" id="GO:0005576">
    <property type="term" value="C:extracellular region"/>
    <property type="evidence" value="ECO:0007669"/>
    <property type="project" value="UniProtKB-SubCell"/>
</dbReference>
<dbReference type="GO" id="GO:0000287">
    <property type="term" value="F:magnesium ion binding"/>
    <property type="evidence" value="ECO:0007669"/>
    <property type="project" value="UniProtKB-UniRule"/>
</dbReference>
<dbReference type="GO" id="GO:0004540">
    <property type="term" value="F:RNA nuclease activity"/>
    <property type="evidence" value="ECO:0007669"/>
    <property type="project" value="InterPro"/>
</dbReference>
<dbReference type="GO" id="GO:0017148">
    <property type="term" value="P:negative regulation of translation"/>
    <property type="evidence" value="ECO:0000315"/>
    <property type="project" value="MTBBASE"/>
</dbReference>
<dbReference type="CDD" id="cd09872">
    <property type="entry name" value="PIN_Sll0205-like"/>
    <property type="match status" value="1"/>
</dbReference>
<dbReference type="FunFam" id="3.40.50.1010:FF:000084">
    <property type="entry name" value="Ribonuclease VapC"/>
    <property type="match status" value="1"/>
</dbReference>
<dbReference type="Gene3D" id="3.40.50.1010">
    <property type="entry name" value="5'-nuclease"/>
    <property type="match status" value="1"/>
</dbReference>
<dbReference type="HAMAP" id="MF_00265">
    <property type="entry name" value="VapC_Nob1"/>
    <property type="match status" value="1"/>
</dbReference>
<dbReference type="InterPro" id="IPR029060">
    <property type="entry name" value="PIN-like_dom_sf"/>
</dbReference>
<dbReference type="InterPro" id="IPR002716">
    <property type="entry name" value="PIN_dom"/>
</dbReference>
<dbReference type="InterPro" id="IPR041705">
    <property type="entry name" value="PIN_Sll0205"/>
</dbReference>
<dbReference type="InterPro" id="IPR052919">
    <property type="entry name" value="TA_system_RNase"/>
</dbReference>
<dbReference type="InterPro" id="IPR022907">
    <property type="entry name" value="VapC_family"/>
</dbReference>
<dbReference type="PANTHER" id="PTHR36173">
    <property type="entry name" value="RIBONUCLEASE VAPC16-RELATED"/>
    <property type="match status" value="1"/>
</dbReference>
<dbReference type="PANTHER" id="PTHR36173:SF1">
    <property type="entry name" value="RIBONUCLEASE VAPC22"/>
    <property type="match status" value="1"/>
</dbReference>
<dbReference type="Pfam" id="PF01850">
    <property type="entry name" value="PIN"/>
    <property type="match status" value="1"/>
</dbReference>
<dbReference type="SUPFAM" id="SSF88723">
    <property type="entry name" value="PIN domain-like"/>
    <property type="match status" value="1"/>
</dbReference>
<evidence type="ECO:0000255" key="1">
    <source>
        <dbReference type="HAMAP-Rule" id="MF_00265"/>
    </source>
</evidence>
<evidence type="ECO:0000269" key="2">
    <source>
    </source>
</evidence>
<evidence type="ECO:0000269" key="3">
    <source>
    </source>
</evidence>
<sequence length="130" mass="14611">MTTVLLDSHVAYWWSAEPQRLSMAASQAIEHADELAVAAISWFELAWLAEQERIQLAIPVLSWLQQLAEHVRTVGITPSVAATAVALPSSFPGDPADRLIYATAIEHGWRLVTKDRRLRSHRHPRPVTVW</sequence>